<keyword id="KW-0903">Direct protein sequencing</keyword>
<keyword id="KW-0527">Neuropeptide</keyword>
<keyword id="KW-0964">Secreted</keyword>
<feature type="peptide" id="PRO_0000421490" description="Extended FMRFamide-2" evidence="3">
    <location>
        <begin position="1"/>
        <end position="9"/>
    </location>
</feature>
<feature type="unsure residue" description="L or I" evidence="3">
    <location>
        <position position="4"/>
    </location>
</feature>
<feature type="unsure residue" description="L or I" evidence="3">
    <location>
        <position position="6"/>
    </location>
</feature>
<reference evidence="5" key="1">
    <citation type="journal article" date="2012" name="Syst. Biol.">
        <title>Peptidomics-based phylogeny and biogeography of Mantophasmatodea (Hexapoda).</title>
        <authorList>
            <person name="Predel R."/>
            <person name="Neupert S."/>
            <person name="Huetteroth W."/>
            <person name="Kahnt J."/>
            <person name="Waidelich D."/>
            <person name="Roth S."/>
        </authorList>
    </citation>
    <scope>PROTEIN SEQUENCE</scope>
    <source>
        <tissue evidence="3">Thoracic perisympathetic organs</tissue>
    </source>
</reference>
<sequence length="9" mass="1066">SDYLQLART</sequence>
<accession>B3A0J7</accession>
<organism>
    <name type="scientific">Pachyphasma brandbergense</name>
    <name type="common">Gladiator</name>
    <name type="synonym">Heel-walker</name>
    <dbReference type="NCBI Taxonomy" id="1041430"/>
    <lineage>
        <taxon>Eukaryota</taxon>
        <taxon>Metazoa</taxon>
        <taxon>Ecdysozoa</taxon>
        <taxon>Arthropoda</taxon>
        <taxon>Hexapoda</taxon>
        <taxon>Insecta</taxon>
        <taxon>Pterygota</taxon>
        <taxon>Neoptera</taxon>
        <taxon>Polyneoptera</taxon>
        <taxon>Mantophasmatodea</taxon>
        <taxon>Mantophasmatidae</taxon>
        <taxon>Pachyphasma</taxon>
    </lineage>
</organism>
<comment type="function">
    <text evidence="1">FMRFamides and FMRFamide-like peptides are neuropeptides.</text>
</comment>
<comment type="subcellular location">
    <subcellularLocation>
        <location evidence="6">Secreted</location>
    </subcellularLocation>
</comment>
<comment type="similarity">
    <text evidence="2">Belongs to the FARP (FMRF amide related peptide) family.</text>
</comment>
<evidence type="ECO:0000250" key="1">
    <source>
        <dbReference type="UniProtKB" id="P34405"/>
    </source>
</evidence>
<evidence type="ECO:0000255" key="2"/>
<evidence type="ECO:0000269" key="3">
    <source>
    </source>
</evidence>
<evidence type="ECO:0000303" key="4">
    <source>
    </source>
</evidence>
<evidence type="ECO:0000305" key="5"/>
<evidence type="ECO:0000305" key="6">
    <source>
    </source>
</evidence>
<name>FAR2_PACBA</name>
<dbReference type="GO" id="GO:0005576">
    <property type="term" value="C:extracellular region"/>
    <property type="evidence" value="ECO:0007669"/>
    <property type="project" value="UniProtKB-SubCell"/>
</dbReference>
<dbReference type="GO" id="GO:0007218">
    <property type="term" value="P:neuropeptide signaling pathway"/>
    <property type="evidence" value="ECO:0007669"/>
    <property type="project" value="UniProtKB-KW"/>
</dbReference>
<proteinExistence type="evidence at protein level"/>
<protein>
    <recommendedName>
        <fullName evidence="4">Extended FMRFamide-2</fullName>
        <shortName evidence="4">FMRFa-2</shortName>
    </recommendedName>
</protein>